<comment type="function">
    <text evidence="1">Type IV dipeptidyl-peptidase which removes N-terminal dipeptides sequentially from polypeptides having unsubstituted N-termini provided that the penultimate residue is proline.</text>
</comment>
<comment type="catalytic activity">
    <reaction>
        <text>Release of an N-terminal dipeptide, Xaa-Yaa-|-Zaa-, from a polypeptide, preferentially when Yaa is Pro, provided Zaa is neither Pro nor hydroxyproline.</text>
        <dbReference type="EC" id="3.4.14.5"/>
    </reaction>
</comment>
<comment type="subcellular location">
    <subcellularLocation>
        <location evidence="1">Vacuole membrane</location>
        <topology evidence="1">Single-pass type II membrane protein</topology>
    </subcellularLocation>
    <text evidence="1">Lysosome-like vacuoles.</text>
</comment>
<comment type="similarity">
    <text evidence="4">Belongs to the peptidase S9B family.</text>
</comment>
<feature type="chain" id="PRO_0000412126" description="Probable dipeptidyl-aminopeptidase B">
    <location>
        <begin position="1"/>
        <end position="922"/>
    </location>
</feature>
<feature type="topological domain" description="Cytoplasmic" evidence="2">
    <location>
        <begin position="1"/>
        <end position="99"/>
    </location>
</feature>
<feature type="transmembrane region" description="Helical; Signal-anchor for type II membrane protein" evidence="2">
    <location>
        <begin position="100"/>
        <end position="120"/>
    </location>
</feature>
<feature type="topological domain" description="Vacuolar" evidence="2">
    <location>
        <begin position="121"/>
        <end position="922"/>
    </location>
</feature>
<feature type="region of interest" description="Disordered" evidence="3">
    <location>
        <begin position="1"/>
        <end position="21"/>
    </location>
</feature>
<feature type="compositionally biased region" description="Basic and acidic residues" evidence="3">
    <location>
        <begin position="1"/>
        <end position="16"/>
    </location>
</feature>
<feature type="active site" description="Charge relay system" evidence="1">
    <location>
        <position position="756"/>
    </location>
</feature>
<feature type="active site" description="Charge relay system" evidence="1">
    <location>
        <position position="833"/>
    </location>
</feature>
<feature type="active site" description="Charge relay system" evidence="1">
    <location>
        <position position="866"/>
    </location>
</feature>
<feature type="glycosylation site" description="N-linked (GlcNAc...) asparagine" evidence="2">
    <location>
        <position position="135"/>
    </location>
</feature>
<feature type="glycosylation site" description="N-linked (GlcNAc...) asparagine" evidence="2">
    <location>
        <position position="200"/>
    </location>
</feature>
<feature type="glycosylation site" description="N-linked (GlcNAc...) asparagine" evidence="2">
    <location>
        <position position="351"/>
    </location>
</feature>
<feature type="glycosylation site" description="N-linked (GlcNAc...) asparagine" evidence="2">
    <location>
        <position position="574"/>
    </location>
</feature>
<feature type="glycosylation site" description="N-linked (GlcNAc...) asparagine" evidence="2">
    <location>
        <position position="815"/>
    </location>
</feature>
<feature type="glycosylation site" description="N-linked (GlcNAc...) asparagine" evidence="2">
    <location>
        <position position="902"/>
    </location>
</feature>
<name>DAPB_AJECN</name>
<keyword id="KW-0031">Aminopeptidase</keyword>
<keyword id="KW-0325">Glycoprotein</keyword>
<keyword id="KW-0378">Hydrolase</keyword>
<keyword id="KW-0472">Membrane</keyword>
<keyword id="KW-0645">Protease</keyword>
<keyword id="KW-1185">Reference proteome</keyword>
<keyword id="KW-0720">Serine protease</keyword>
<keyword id="KW-0735">Signal-anchor</keyword>
<keyword id="KW-0812">Transmembrane</keyword>
<keyword id="KW-1133">Transmembrane helix</keyword>
<keyword id="KW-0926">Vacuole</keyword>
<evidence type="ECO:0000250" key="1"/>
<evidence type="ECO:0000255" key="2"/>
<evidence type="ECO:0000256" key="3">
    <source>
        <dbReference type="SAM" id="MobiDB-lite"/>
    </source>
</evidence>
<evidence type="ECO:0000305" key="4"/>
<proteinExistence type="inferred from homology"/>
<sequence>MATEKGHSRDDEERVPLTRGSTEFRNSIDSFDYSSSTASLSLAVIDRINNSTQDAGLSEKGPRDDDDDRYWDDDVEYDVEDADYIPSGGKPMHKSVKIALWSLLFLSLGGWSLAFVLFIFRSHDTYQTPILSEDNISSGGLRGDRITLDDVLGEEWMPRHHFISWFPGPNGEDGLLLEKDGPGSTGYLRVEDIVSRKDTNSSKGSIVLMQKNTFTVGGETVICSQVWPSPDLKTVLVLSEKKQNWRHSFTGKYWLFDVDTQTGQPLDPAAQDQRIQLASWSHKSDAVVFTRDNNMFLRKLSSKEVITITSDGGVDLLYGVPDWVYEEEVFSGNSATWWAHDGNYIAFLRTNESAVPEYPIQYFVSRPSGEDPNLGEENYPEVREIKYPKAGAPNPIVDLQFYDIRKGEIFSVDVADRFPDDNRLIIEVLWASNGKVLVRETNRESDILIIAAIDVLSRTGKIVRKEDINALDGGWVEPTQSTRFIPADPSNDRPEDGYIDTVIHEGRDQLAYFTPLDNPKPLILTKGHSEVVNSPSGVDLKRGLVYFVVAGNEPWERHVYSVKFDGTALQPVTNVSESSYYDVSFSDGAGYALLNFRGPKVPWQKVISTPANENPFEEIIEQNNHLSRKLRLFSLESKVFQYINIDGFSLPVLERRPPNFDPTKKYPVLFYLYGGPGSQTVDKKFGVDFQSYVASTLGYIVVTVDGRGTGYIGRKSLSLVRGKLGHYEARDQIEVAKKWAAKPYVDESRMAIWGWSYGGFMTLKTIEEDGGRTFQYGMAVAPVTDWRYYDSIYAERYMHTPQHNPQGYDSSAISNTTALANSVRFLVMHGTADDNVHIQNTLTLLDKLDLANVDNYDVHVFPDSNHNINYHNAHKMVYTRLADWLVNAFNGQWLKTNNPTPNDSLFRRVATWAGLYKFKHLC</sequence>
<accession>A6RBI0</accession>
<gene>
    <name type="primary">DAPB</name>
    <name type="ORF">HCAG_06318</name>
</gene>
<dbReference type="EC" id="3.4.14.5"/>
<dbReference type="EMBL" id="CH476661">
    <property type="protein sequence ID" value="EDN10515.1"/>
    <property type="molecule type" value="Genomic_DNA"/>
</dbReference>
<dbReference type="SMR" id="A6RBI0"/>
<dbReference type="STRING" id="339724.A6RBI0"/>
<dbReference type="ESTHER" id="ajecn-dapb">
    <property type="family name" value="DPP4N_Peptidase_S9"/>
</dbReference>
<dbReference type="MEROPS" id="S09.006"/>
<dbReference type="GlyCosmos" id="A6RBI0">
    <property type="glycosylation" value="6 sites, No reported glycans"/>
</dbReference>
<dbReference type="KEGG" id="aje:HCAG_06318"/>
<dbReference type="VEuPathDB" id="FungiDB:HCAG_06318"/>
<dbReference type="HOGENOM" id="CLU_006105_0_1_1"/>
<dbReference type="OMA" id="MRTPQEN"/>
<dbReference type="OrthoDB" id="1430at299071"/>
<dbReference type="Proteomes" id="UP000009297">
    <property type="component" value="Unassembled WGS sequence"/>
</dbReference>
<dbReference type="GO" id="GO:0005886">
    <property type="term" value="C:plasma membrane"/>
    <property type="evidence" value="ECO:0007669"/>
    <property type="project" value="TreeGrafter"/>
</dbReference>
<dbReference type="GO" id="GO:0005774">
    <property type="term" value="C:vacuolar membrane"/>
    <property type="evidence" value="ECO:0007669"/>
    <property type="project" value="UniProtKB-SubCell"/>
</dbReference>
<dbReference type="GO" id="GO:0004177">
    <property type="term" value="F:aminopeptidase activity"/>
    <property type="evidence" value="ECO:0007669"/>
    <property type="project" value="UniProtKB-KW"/>
</dbReference>
<dbReference type="GO" id="GO:0008239">
    <property type="term" value="F:dipeptidyl-peptidase activity"/>
    <property type="evidence" value="ECO:0007669"/>
    <property type="project" value="UniProtKB-EC"/>
</dbReference>
<dbReference type="GO" id="GO:0008236">
    <property type="term" value="F:serine-type peptidase activity"/>
    <property type="evidence" value="ECO:0007669"/>
    <property type="project" value="UniProtKB-KW"/>
</dbReference>
<dbReference type="GO" id="GO:0006508">
    <property type="term" value="P:proteolysis"/>
    <property type="evidence" value="ECO:0007669"/>
    <property type="project" value="UniProtKB-KW"/>
</dbReference>
<dbReference type="FunFam" id="3.40.50.1820:FF:000003">
    <property type="entry name" value="Dipeptidyl peptidase 4"/>
    <property type="match status" value="1"/>
</dbReference>
<dbReference type="Gene3D" id="3.40.50.1820">
    <property type="entry name" value="alpha/beta hydrolase"/>
    <property type="match status" value="1"/>
</dbReference>
<dbReference type="Gene3D" id="2.140.10.30">
    <property type="entry name" value="Dipeptidylpeptidase IV, N-terminal domain"/>
    <property type="match status" value="1"/>
</dbReference>
<dbReference type="InterPro" id="IPR029058">
    <property type="entry name" value="AB_hydrolase_fold"/>
</dbReference>
<dbReference type="InterPro" id="IPR001375">
    <property type="entry name" value="Peptidase_S9_cat"/>
</dbReference>
<dbReference type="InterPro" id="IPR002469">
    <property type="entry name" value="Peptidase_S9B_N"/>
</dbReference>
<dbReference type="InterPro" id="IPR050278">
    <property type="entry name" value="Serine_Prot_S9B/DPPIV"/>
</dbReference>
<dbReference type="PANTHER" id="PTHR11731:SF200">
    <property type="entry name" value="DIPEPTIDYL PEPTIDASE 10, ISOFORM B"/>
    <property type="match status" value="1"/>
</dbReference>
<dbReference type="PANTHER" id="PTHR11731">
    <property type="entry name" value="PROTEASE FAMILY S9B,C DIPEPTIDYL-PEPTIDASE IV-RELATED"/>
    <property type="match status" value="1"/>
</dbReference>
<dbReference type="Pfam" id="PF00930">
    <property type="entry name" value="DPPIV_N"/>
    <property type="match status" value="1"/>
</dbReference>
<dbReference type="Pfam" id="PF00326">
    <property type="entry name" value="Peptidase_S9"/>
    <property type="match status" value="1"/>
</dbReference>
<dbReference type="SUPFAM" id="SSF53474">
    <property type="entry name" value="alpha/beta-Hydrolases"/>
    <property type="match status" value="1"/>
</dbReference>
<dbReference type="SUPFAM" id="SSF82171">
    <property type="entry name" value="DPP6 N-terminal domain-like"/>
    <property type="match status" value="1"/>
</dbReference>
<organism>
    <name type="scientific">Ajellomyces capsulatus (strain NAm1 / WU24)</name>
    <name type="common">Darling's disease fungus</name>
    <name type="synonym">Histoplasma capsulatum</name>
    <dbReference type="NCBI Taxonomy" id="2059318"/>
    <lineage>
        <taxon>Eukaryota</taxon>
        <taxon>Fungi</taxon>
        <taxon>Dikarya</taxon>
        <taxon>Ascomycota</taxon>
        <taxon>Pezizomycotina</taxon>
        <taxon>Eurotiomycetes</taxon>
        <taxon>Eurotiomycetidae</taxon>
        <taxon>Onygenales</taxon>
        <taxon>Ajellomycetaceae</taxon>
        <taxon>Histoplasma</taxon>
    </lineage>
</organism>
<reference key="1">
    <citation type="journal article" date="2009" name="Genome Res.">
        <title>Comparative genomic analyses of the human fungal pathogens Coccidioides and their relatives.</title>
        <authorList>
            <person name="Sharpton T.J."/>
            <person name="Stajich J.E."/>
            <person name="Rounsley S.D."/>
            <person name="Gardner M.J."/>
            <person name="Wortman J.R."/>
            <person name="Jordar V.S."/>
            <person name="Maiti R."/>
            <person name="Kodira C.D."/>
            <person name="Neafsey D.E."/>
            <person name="Zeng Q."/>
            <person name="Hung C.-Y."/>
            <person name="McMahan C."/>
            <person name="Muszewska A."/>
            <person name="Grynberg M."/>
            <person name="Mandel M.A."/>
            <person name="Kellner E.M."/>
            <person name="Barker B.M."/>
            <person name="Galgiani J.N."/>
            <person name="Orbach M.J."/>
            <person name="Kirkland T.N."/>
            <person name="Cole G.T."/>
            <person name="Henn M.R."/>
            <person name="Birren B.W."/>
            <person name="Taylor J.W."/>
        </authorList>
    </citation>
    <scope>NUCLEOTIDE SEQUENCE [LARGE SCALE GENOMIC DNA]</scope>
    <source>
        <strain>NAm1 / WU24</strain>
    </source>
</reference>
<protein>
    <recommendedName>
        <fullName>Probable dipeptidyl-aminopeptidase B</fullName>
        <shortName>DPAP B</shortName>
        <ecNumber>3.4.14.5</ecNumber>
    </recommendedName>
</protein>